<sequence length="167" mass="18244">MADPARAAKLAQRIKVVVAEALGRRVKDPRVESITVTDARVTNDLQHATIYYTVFGDDVAQADAARALEKAKGVLRQEVGRNITVRLTPTLEFVADQIPVNASNLEELLREAKRRDAEVAALAASAKHAGEADPYKGDSPEDIDEDDFDEEDTDLSGDNDLDEDANR</sequence>
<comment type="function">
    <text evidence="1">One of several proteins that assist in the late maturation steps of the functional core of the 30S ribosomal subunit. Associates with free 30S ribosomal subunits (but not with 30S subunits that are part of 70S ribosomes or polysomes). Required for efficient processing of 16S rRNA. May interact with the 5'-terminal helix region of 16S rRNA.</text>
</comment>
<comment type="subunit">
    <text evidence="1">Monomer. Binds 30S ribosomal subunits, but not 50S ribosomal subunits or 70S ribosomes.</text>
</comment>
<comment type="subcellular location">
    <subcellularLocation>
        <location evidence="1">Cytoplasm</location>
    </subcellularLocation>
</comment>
<comment type="similarity">
    <text evidence="1">Belongs to the RbfA family.</text>
</comment>
<reference key="1">
    <citation type="journal article" date="2006" name="PLoS Genet.">
        <title>Secrets of soil survival revealed by the genome sequence of Arthrobacter aurescens TC1.</title>
        <authorList>
            <person name="Mongodin E.F."/>
            <person name="Shapir N."/>
            <person name="Daugherty S.C."/>
            <person name="DeBoy R.T."/>
            <person name="Emerson J.B."/>
            <person name="Shvartzbeyn A."/>
            <person name="Radune D."/>
            <person name="Vamathevan J."/>
            <person name="Riggs F."/>
            <person name="Grinberg V."/>
            <person name="Khouri H.M."/>
            <person name="Wackett L.P."/>
            <person name="Nelson K.E."/>
            <person name="Sadowsky M.J."/>
        </authorList>
    </citation>
    <scope>NUCLEOTIDE SEQUENCE [LARGE SCALE GENOMIC DNA]</scope>
    <source>
        <strain>TC1</strain>
    </source>
</reference>
<evidence type="ECO:0000255" key="1">
    <source>
        <dbReference type="HAMAP-Rule" id="MF_00003"/>
    </source>
</evidence>
<evidence type="ECO:0000256" key="2">
    <source>
        <dbReference type="SAM" id="MobiDB-lite"/>
    </source>
</evidence>
<organism>
    <name type="scientific">Paenarthrobacter aurescens (strain TC1)</name>
    <dbReference type="NCBI Taxonomy" id="290340"/>
    <lineage>
        <taxon>Bacteria</taxon>
        <taxon>Bacillati</taxon>
        <taxon>Actinomycetota</taxon>
        <taxon>Actinomycetes</taxon>
        <taxon>Micrococcales</taxon>
        <taxon>Micrococcaceae</taxon>
        <taxon>Paenarthrobacter</taxon>
    </lineage>
</organism>
<proteinExistence type="inferred from homology"/>
<gene>
    <name evidence="1" type="primary">rbfA</name>
    <name type="ordered locus">AAur_1562</name>
</gene>
<dbReference type="EMBL" id="CP000474">
    <property type="protein sequence ID" value="ABM09730.1"/>
    <property type="molecule type" value="Genomic_DNA"/>
</dbReference>
<dbReference type="RefSeq" id="WP_011774274.1">
    <property type="nucleotide sequence ID" value="NC_008711.1"/>
</dbReference>
<dbReference type="SMR" id="A1R517"/>
<dbReference type="STRING" id="290340.AAur_1562"/>
<dbReference type="KEGG" id="aau:AAur_1562"/>
<dbReference type="eggNOG" id="COG0858">
    <property type="taxonomic scope" value="Bacteria"/>
</dbReference>
<dbReference type="HOGENOM" id="CLU_089475_0_0_11"/>
<dbReference type="OrthoDB" id="307788at2"/>
<dbReference type="Proteomes" id="UP000000637">
    <property type="component" value="Chromosome"/>
</dbReference>
<dbReference type="GO" id="GO:0005829">
    <property type="term" value="C:cytosol"/>
    <property type="evidence" value="ECO:0007669"/>
    <property type="project" value="TreeGrafter"/>
</dbReference>
<dbReference type="GO" id="GO:0043024">
    <property type="term" value="F:ribosomal small subunit binding"/>
    <property type="evidence" value="ECO:0007669"/>
    <property type="project" value="TreeGrafter"/>
</dbReference>
<dbReference type="GO" id="GO:0030490">
    <property type="term" value="P:maturation of SSU-rRNA"/>
    <property type="evidence" value="ECO:0007669"/>
    <property type="project" value="UniProtKB-UniRule"/>
</dbReference>
<dbReference type="Gene3D" id="3.30.300.20">
    <property type="match status" value="1"/>
</dbReference>
<dbReference type="HAMAP" id="MF_00003">
    <property type="entry name" value="RbfA"/>
    <property type="match status" value="1"/>
</dbReference>
<dbReference type="InterPro" id="IPR015946">
    <property type="entry name" value="KH_dom-like_a/b"/>
</dbReference>
<dbReference type="InterPro" id="IPR000238">
    <property type="entry name" value="RbfA"/>
</dbReference>
<dbReference type="InterPro" id="IPR023799">
    <property type="entry name" value="RbfA_dom_sf"/>
</dbReference>
<dbReference type="InterPro" id="IPR020053">
    <property type="entry name" value="Ribosome-bd_factorA_CS"/>
</dbReference>
<dbReference type="NCBIfam" id="TIGR00082">
    <property type="entry name" value="rbfA"/>
    <property type="match status" value="1"/>
</dbReference>
<dbReference type="PANTHER" id="PTHR33515">
    <property type="entry name" value="RIBOSOME-BINDING FACTOR A, CHLOROPLASTIC-RELATED"/>
    <property type="match status" value="1"/>
</dbReference>
<dbReference type="PANTHER" id="PTHR33515:SF1">
    <property type="entry name" value="RIBOSOME-BINDING FACTOR A, CHLOROPLASTIC-RELATED"/>
    <property type="match status" value="1"/>
</dbReference>
<dbReference type="Pfam" id="PF02033">
    <property type="entry name" value="RBFA"/>
    <property type="match status" value="1"/>
</dbReference>
<dbReference type="SUPFAM" id="SSF89919">
    <property type="entry name" value="Ribosome-binding factor A, RbfA"/>
    <property type="match status" value="1"/>
</dbReference>
<dbReference type="PROSITE" id="PS01319">
    <property type="entry name" value="RBFA"/>
    <property type="match status" value="1"/>
</dbReference>
<feature type="chain" id="PRO_1000000068" description="Ribosome-binding factor A">
    <location>
        <begin position="1"/>
        <end position="167"/>
    </location>
</feature>
<feature type="region of interest" description="Disordered" evidence="2">
    <location>
        <begin position="122"/>
        <end position="167"/>
    </location>
</feature>
<feature type="compositionally biased region" description="Basic and acidic residues" evidence="2">
    <location>
        <begin position="128"/>
        <end position="139"/>
    </location>
</feature>
<feature type="compositionally biased region" description="Acidic residues" evidence="2">
    <location>
        <begin position="140"/>
        <end position="167"/>
    </location>
</feature>
<protein>
    <recommendedName>
        <fullName evidence="1">Ribosome-binding factor A</fullName>
    </recommendedName>
</protein>
<accession>A1R517</accession>
<keyword id="KW-0963">Cytoplasm</keyword>
<keyword id="KW-0690">Ribosome biogenesis</keyword>
<name>RBFA_PAEAT</name>